<reference key="1">
    <citation type="journal article" date="2000" name="Nature">
        <title>Sequence and analysis of chromosome 1 of the plant Arabidopsis thaliana.</title>
        <authorList>
            <person name="Theologis A."/>
            <person name="Ecker J.R."/>
            <person name="Palm C.J."/>
            <person name="Federspiel N.A."/>
            <person name="Kaul S."/>
            <person name="White O."/>
            <person name="Alonso J."/>
            <person name="Altafi H."/>
            <person name="Araujo R."/>
            <person name="Bowman C.L."/>
            <person name="Brooks S.Y."/>
            <person name="Buehler E."/>
            <person name="Chan A."/>
            <person name="Chao Q."/>
            <person name="Chen H."/>
            <person name="Cheuk R.F."/>
            <person name="Chin C.W."/>
            <person name="Chung M.K."/>
            <person name="Conn L."/>
            <person name="Conway A.B."/>
            <person name="Conway A.R."/>
            <person name="Creasy T.H."/>
            <person name="Dewar K."/>
            <person name="Dunn P."/>
            <person name="Etgu P."/>
            <person name="Feldblyum T.V."/>
            <person name="Feng J.-D."/>
            <person name="Fong B."/>
            <person name="Fujii C.Y."/>
            <person name="Gill J.E."/>
            <person name="Goldsmith A.D."/>
            <person name="Haas B."/>
            <person name="Hansen N.F."/>
            <person name="Hughes B."/>
            <person name="Huizar L."/>
            <person name="Hunter J.L."/>
            <person name="Jenkins J."/>
            <person name="Johnson-Hopson C."/>
            <person name="Khan S."/>
            <person name="Khaykin E."/>
            <person name="Kim C.J."/>
            <person name="Koo H.L."/>
            <person name="Kremenetskaia I."/>
            <person name="Kurtz D.B."/>
            <person name="Kwan A."/>
            <person name="Lam B."/>
            <person name="Langin-Hooper S."/>
            <person name="Lee A."/>
            <person name="Lee J.M."/>
            <person name="Lenz C.A."/>
            <person name="Li J.H."/>
            <person name="Li Y.-P."/>
            <person name="Lin X."/>
            <person name="Liu S.X."/>
            <person name="Liu Z.A."/>
            <person name="Luros J.S."/>
            <person name="Maiti R."/>
            <person name="Marziali A."/>
            <person name="Militscher J."/>
            <person name="Miranda M."/>
            <person name="Nguyen M."/>
            <person name="Nierman W.C."/>
            <person name="Osborne B.I."/>
            <person name="Pai G."/>
            <person name="Peterson J."/>
            <person name="Pham P.K."/>
            <person name="Rizzo M."/>
            <person name="Rooney T."/>
            <person name="Rowley D."/>
            <person name="Sakano H."/>
            <person name="Salzberg S.L."/>
            <person name="Schwartz J.R."/>
            <person name="Shinn P."/>
            <person name="Southwick A.M."/>
            <person name="Sun H."/>
            <person name="Tallon L.J."/>
            <person name="Tambunga G."/>
            <person name="Toriumi M.J."/>
            <person name="Town C.D."/>
            <person name="Utterback T."/>
            <person name="Van Aken S."/>
            <person name="Vaysberg M."/>
            <person name="Vysotskaia V.S."/>
            <person name="Walker M."/>
            <person name="Wu D."/>
            <person name="Yu G."/>
            <person name="Fraser C.M."/>
            <person name="Venter J.C."/>
            <person name="Davis R.W."/>
        </authorList>
    </citation>
    <scope>NUCLEOTIDE SEQUENCE [LARGE SCALE GENOMIC DNA]</scope>
    <source>
        <strain>cv. Columbia</strain>
    </source>
</reference>
<reference key="2">
    <citation type="journal article" date="2017" name="Plant J.">
        <title>Araport11: a complete reannotation of the Arabidopsis thaliana reference genome.</title>
        <authorList>
            <person name="Cheng C.Y."/>
            <person name="Krishnakumar V."/>
            <person name="Chan A.P."/>
            <person name="Thibaud-Nissen F."/>
            <person name="Schobel S."/>
            <person name="Town C.D."/>
        </authorList>
    </citation>
    <scope>GENOME REANNOTATION</scope>
    <source>
        <strain>cv. Columbia</strain>
    </source>
</reference>
<reference key="3">
    <citation type="journal article" date="2006" name="Plant Biotechnol. J.">
        <title>Simultaneous high-throughput recombinational cloning of open reading frames in closed and open configurations.</title>
        <authorList>
            <person name="Underwood B.A."/>
            <person name="Vanderhaeghen R."/>
            <person name="Whitford R."/>
            <person name="Town C.D."/>
            <person name="Hilson P."/>
        </authorList>
    </citation>
    <scope>NUCLEOTIDE SEQUENCE [LARGE SCALE MRNA]</scope>
    <source>
        <strain>cv. Columbia</strain>
    </source>
</reference>
<reference key="4">
    <citation type="submission" date="2002-03" db="EMBL/GenBank/DDBJ databases">
        <title>Full-length cDNA from Arabidopsis thaliana.</title>
        <authorList>
            <person name="Brover V.V."/>
            <person name="Troukhan M.E."/>
            <person name="Alexandrov N.A."/>
            <person name="Lu Y.-P."/>
            <person name="Flavell R.B."/>
            <person name="Feldmann K.A."/>
        </authorList>
    </citation>
    <scope>NUCLEOTIDE SEQUENCE [LARGE SCALE MRNA]</scope>
</reference>
<reference key="5">
    <citation type="journal article" date="2001" name="Plant Mol. Biol.">
        <title>Two large Arabidopsis thaliana gene families are homologous to the Brassica gene superfamily that encodes pollen coat proteins and the male component of the self-incompatibility response.</title>
        <authorList>
            <person name="Vanoosthuyse V."/>
            <person name="Miege C."/>
            <person name="Dumas C."/>
            <person name="Cock J.M."/>
        </authorList>
    </citation>
    <scope>IDENTIFICATION</scope>
</reference>
<reference key="6">
    <citation type="journal article" date="2002" name="Planta">
        <title>Plant defensins.</title>
        <authorList>
            <person name="Thomma B.P.H.J."/>
            <person name="Cammue B.P."/>
            <person name="Thevissen K."/>
        </authorList>
    </citation>
    <scope>GENE FAMILY</scope>
    <scope>NOMENCLATURE</scope>
</reference>
<reference key="7">
    <citation type="journal article" date="2005" name="Plant Physiol.">
        <title>Genome organization of more than 300 defensin-like genes in Arabidopsis.</title>
        <authorList>
            <person name="Silverstein K.A.T."/>
            <person name="Graham M.A."/>
            <person name="Paape T.D."/>
            <person name="VandenBosch K.A."/>
        </authorList>
    </citation>
    <scope>GENE FAMILY</scope>
</reference>
<evidence type="ECO:0000250" key="1"/>
<evidence type="ECO:0000255" key="2"/>
<evidence type="ECO:0000305" key="3"/>
<protein>
    <recommendedName>
        <fullName>Defensin-like protein 5</fullName>
    </recommendedName>
    <alternativeName>
        <fullName>Low-molecular-weight cysteine-rich protein 66</fullName>
        <shortName>Protein LCR66</shortName>
    </alternativeName>
    <alternativeName>
        <fullName>Plant defensin 2.4</fullName>
    </alternativeName>
</protein>
<proteinExistence type="inferred from homology"/>
<accession>Q9C947</accession>
<accession>A0MED6</accession>
<accession>Q1PFI2</accession>
<accession>Q8LEG6</accession>
<feature type="signal peptide" evidence="2">
    <location>
        <begin position="1"/>
        <end position="29"/>
    </location>
</feature>
<feature type="chain" id="PRO_0000007022" description="Defensin-like protein 5">
    <location>
        <begin position="30"/>
        <end position="76"/>
    </location>
</feature>
<feature type="disulfide bond" evidence="1">
    <location>
        <begin position="32"/>
        <end position="76"/>
    </location>
</feature>
<feature type="disulfide bond" evidence="1">
    <location>
        <begin position="43"/>
        <end position="63"/>
    </location>
</feature>
<feature type="disulfide bond" evidence="1">
    <location>
        <begin position="49"/>
        <end position="70"/>
    </location>
</feature>
<feature type="disulfide bond" evidence="1">
    <location>
        <begin position="53"/>
        <end position="72"/>
    </location>
</feature>
<feature type="sequence conflict" description="In Ref. 4; AAM62652." evidence="3" ref="4">
    <original>N</original>
    <variation>K</variation>
    <location>
        <position position="8"/>
    </location>
</feature>
<feature type="sequence conflict" description="In Ref. 4; AAM62652." evidence="3" ref="4">
    <original>LVT</original>
    <variation>PVR</variation>
    <location>
        <begin position="24"/>
        <end position="26"/>
    </location>
</feature>
<sequence length="76" mass="8290">MKVSPRLNSALLLLFMILATVMGLVTVEARTCETSSNLFNGPCLSSSNCANVCHNEGFSDGDCRGFRRRCLCTRPC</sequence>
<name>DEF05_ARATH</name>
<dbReference type="EMBL" id="AC018908">
    <property type="protein sequence ID" value="AAG51654.1"/>
    <property type="status" value="ALT_INIT"/>
    <property type="molecule type" value="Genomic_DNA"/>
</dbReference>
<dbReference type="EMBL" id="CP002684">
    <property type="protein sequence ID" value="AEE33774.1"/>
    <property type="molecule type" value="Genomic_DNA"/>
</dbReference>
<dbReference type="EMBL" id="DQ446381">
    <property type="protein sequence ID" value="ABE65729.1"/>
    <property type="molecule type" value="mRNA"/>
</dbReference>
<dbReference type="EMBL" id="DQ652906">
    <property type="protein sequence ID" value="ABK28445.1"/>
    <property type="status" value="ALT_SEQ"/>
    <property type="molecule type" value="mRNA"/>
</dbReference>
<dbReference type="EMBL" id="AY085425">
    <property type="protein sequence ID" value="AAM62652.1"/>
    <property type="molecule type" value="mRNA"/>
</dbReference>
<dbReference type="PIR" id="D96636">
    <property type="entry name" value="D96636"/>
</dbReference>
<dbReference type="RefSeq" id="NP_176302.2">
    <property type="nucleotide sequence ID" value="NM_104788.4"/>
</dbReference>
<dbReference type="SMR" id="Q9C947"/>
<dbReference type="STRING" id="3702.Q9C947"/>
<dbReference type="PaxDb" id="3702-AT1G61070.1"/>
<dbReference type="ProteomicsDB" id="224066"/>
<dbReference type="EnsemblPlants" id="AT1G61070.1">
    <property type="protein sequence ID" value="AT1G61070.1"/>
    <property type="gene ID" value="AT1G61070"/>
</dbReference>
<dbReference type="GeneID" id="842399"/>
<dbReference type="Gramene" id="AT1G61070.1">
    <property type="protein sequence ID" value="AT1G61070.1"/>
    <property type="gene ID" value="AT1G61070"/>
</dbReference>
<dbReference type="KEGG" id="ath:AT1G61070"/>
<dbReference type="Araport" id="AT1G61070"/>
<dbReference type="TAIR" id="AT1G61070">
    <property type="gene designation" value="LCR66"/>
</dbReference>
<dbReference type="eggNOG" id="ENOG502S7HM">
    <property type="taxonomic scope" value="Eukaryota"/>
</dbReference>
<dbReference type="HOGENOM" id="CLU_161668_1_2_1"/>
<dbReference type="InParanoid" id="Q9C947"/>
<dbReference type="OMA" id="GICIMSS"/>
<dbReference type="PhylomeDB" id="Q9C947"/>
<dbReference type="PRO" id="PR:Q9C947"/>
<dbReference type="Proteomes" id="UP000006548">
    <property type="component" value="Chromosome 1"/>
</dbReference>
<dbReference type="ExpressionAtlas" id="Q9C947">
    <property type="expression patterns" value="baseline and differential"/>
</dbReference>
<dbReference type="GO" id="GO:0005576">
    <property type="term" value="C:extracellular region"/>
    <property type="evidence" value="ECO:0007669"/>
    <property type="project" value="UniProtKB-SubCell"/>
</dbReference>
<dbReference type="GO" id="GO:0006952">
    <property type="term" value="P:defense response"/>
    <property type="evidence" value="ECO:0000250"/>
    <property type="project" value="TAIR"/>
</dbReference>
<dbReference type="GO" id="GO:0050832">
    <property type="term" value="P:defense response to fungus"/>
    <property type="evidence" value="ECO:0007669"/>
    <property type="project" value="UniProtKB-KW"/>
</dbReference>
<dbReference type="GO" id="GO:0031640">
    <property type="term" value="P:killing of cells of another organism"/>
    <property type="evidence" value="ECO:0007669"/>
    <property type="project" value="UniProtKB-KW"/>
</dbReference>
<dbReference type="CDD" id="cd00107">
    <property type="entry name" value="Knot1"/>
    <property type="match status" value="1"/>
</dbReference>
<dbReference type="Gene3D" id="3.30.30.10">
    <property type="entry name" value="Knottin, scorpion toxin-like"/>
    <property type="match status" value="1"/>
</dbReference>
<dbReference type="InterPro" id="IPR008176">
    <property type="entry name" value="Defensin_plant"/>
</dbReference>
<dbReference type="InterPro" id="IPR003614">
    <property type="entry name" value="Scorpion_toxin-like"/>
</dbReference>
<dbReference type="InterPro" id="IPR036574">
    <property type="entry name" value="Scorpion_toxin-like_sf"/>
</dbReference>
<dbReference type="PANTHER" id="PTHR33147">
    <property type="entry name" value="DEFENSIN-LIKE PROTEIN 1"/>
    <property type="match status" value="1"/>
</dbReference>
<dbReference type="PANTHER" id="PTHR33147:SF72">
    <property type="entry name" value="DEFENSIN-LIKE PROTEIN 1-RELATED"/>
    <property type="match status" value="1"/>
</dbReference>
<dbReference type="Pfam" id="PF00304">
    <property type="entry name" value="Gamma-thionin"/>
    <property type="match status" value="1"/>
</dbReference>
<dbReference type="PRINTS" id="PR00288">
    <property type="entry name" value="PUROTHIONIN"/>
</dbReference>
<dbReference type="SMART" id="SM00505">
    <property type="entry name" value="Knot1"/>
    <property type="match status" value="1"/>
</dbReference>
<dbReference type="SUPFAM" id="SSF57095">
    <property type="entry name" value="Scorpion toxin-like"/>
    <property type="match status" value="1"/>
</dbReference>
<dbReference type="PROSITE" id="PS00940">
    <property type="entry name" value="GAMMA_THIONIN"/>
    <property type="match status" value="1"/>
</dbReference>
<organism>
    <name type="scientific">Arabidopsis thaliana</name>
    <name type="common">Mouse-ear cress</name>
    <dbReference type="NCBI Taxonomy" id="3702"/>
    <lineage>
        <taxon>Eukaryota</taxon>
        <taxon>Viridiplantae</taxon>
        <taxon>Streptophyta</taxon>
        <taxon>Embryophyta</taxon>
        <taxon>Tracheophyta</taxon>
        <taxon>Spermatophyta</taxon>
        <taxon>Magnoliopsida</taxon>
        <taxon>eudicotyledons</taxon>
        <taxon>Gunneridae</taxon>
        <taxon>Pentapetalae</taxon>
        <taxon>rosids</taxon>
        <taxon>malvids</taxon>
        <taxon>Brassicales</taxon>
        <taxon>Brassicaceae</taxon>
        <taxon>Camelineae</taxon>
        <taxon>Arabidopsis</taxon>
    </lineage>
</organism>
<comment type="function">
    <text>Confers broad-spectrum resistance to pathogens.</text>
</comment>
<comment type="subcellular location">
    <subcellularLocation>
        <location evidence="1">Secreted</location>
    </subcellularLocation>
</comment>
<comment type="similarity">
    <text evidence="3">Belongs to the DEFL family.</text>
</comment>
<comment type="sequence caution" evidence="3">
    <conflict type="erroneous initiation">
        <sequence resource="EMBL-CDS" id="AAG51654"/>
    </conflict>
</comment>
<comment type="sequence caution" evidence="3">
    <conflict type="erroneous termination">
        <sequence resource="EMBL-CDS" id="ABK28445"/>
    </conflict>
    <text>Extended C-terminus.</text>
</comment>
<gene>
    <name type="primary">PDF2.4</name>
    <name type="synonym">LCR66</name>
    <name type="ordered locus">At1g61070</name>
    <name type="ORF">T7P1.20</name>
</gene>
<keyword id="KW-0929">Antimicrobial</keyword>
<keyword id="KW-1015">Disulfide bond</keyword>
<keyword id="KW-0295">Fungicide</keyword>
<keyword id="KW-0611">Plant defense</keyword>
<keyword id="KW-1185">Reference proteome</keyword>
<keyword id="KW-0964">Secreted</keyword>
<keyword id="KW-0732">Signal</keyword>